<keyword id="KW-0106">Calcium</keyword>
<keyword id="KW-0903">Direct protein sequencing</keyword>
<keyword id="KW-1015">Disulfide bond</keyword>
<keyword id="KW-0325">Glycoprotein</keyword>
<keyword id="KW-0349">Heme</keyword>
<keyword id="KW-0376">Hydrogen peroxide</keyword>
<keyword id="KW-0408">Iron</keyword>
<keyword id="KW-0479">Metal-binding</keyword>
<keyword id="KW-0560">Oxidoreductase</keyword>
<keyword id="KW-0575">Peroxidase</keyword>
<keyword id="KW-0873">Pyrrolidone carboxylic acid</keyword>
<keyword id="KW-0964">Secreted</keyword>
<keyword id="KW-0732">Signal</keyword>
<dbReference type="EC" id="1.11.1.7"/>
<dbReference type="SMR" id="A7QEU4"/>
<dbReference type="PaxDb" id="29760-VIT_16s0098g00820.t01"/>
<dbReference type="EnsemblPlants" id="Vitvi16g01332_t001">
    <property type="protein sequence ID" value="Vitvi16g01332_P001"/>
    <property type="gene ID" value="Vitvi16g01332"/>
</dbReference>
<dbReference type="Gramene" id="Vitvi16g01332_t001">
    <property type="protein sequence ID" value="Vitvi16g01332_P001"/>
    <property type="gene ID" value="Vitvi16g01332"/>
</dbReference>
<dbReference type="eggNOG" id="ENOG502QPX7">
    <property type="taxonomic scope" value="Eukaryota"/>
</dbReference>
<dbReference type="OrthoDB" id="2113341at2759"/>
<dbReference type="ExpressionAtlas" id="A7QEU4">
    <property type="expression patterns" value="baseline and differential"/>
</dbReference>
<dbReference type="GO" id="GO:0005576">
    <property type="term" value="C:extracellular region"/>
    <property type="evidence" value="ECO:0007669"/>
    <property type="project" value="UniProtKB-SubCell"/>
</dbReference>
<dbReference type="GO" id="GO:0020037">
    <property type="term" value="F:heme binding"/>
    <property type="evidence" value="ECO:0007669"/>
    <property type="project" value="InterPro"/>
</dbReference>
<dbReference type="GO" id="GO:0140825">
    <property type="term" value="F:lactoperoxidase activity"/>
    <property type="evidence" value="ECO:0007669"/>
    <property type="project" value="UniProtKB-EC"/>
</dbReference>
<dbReference type="GO" id="GO:0046872">
    <property type="term" value="F:metal ion binding"/>
    <property type="evidence" value="ECO:0007669"/>
    <property type="project" value="UniProtKB-KW"/>
</dbReference>
<dbReference type="GO" id="GO:0042744">
    <property type="term" value="P:hydrogen peroxide catabolic process"/>
    <property type="evidence" value="ECO:0007669"/>
    <property type="project" value="UniProtKB-KW"/>
</dbReference>
<dbReference type="GO" id="GO:0006979">
    <property type="term" value="P:response to oxidative stress"/>
    <property type="evidence" value="ECO:0007669"/>
    <property type="project" value="InterPro"/>
</dbReference>
<dbReference type="CDD" id="cd00693">
    <property type="entry name" value="secretory_peroxidase"/>
    <property type="match status" value="1"/>
</dbReference>
<dbReference type="FunFam" id="1.10.420.10:FF:000006">
    <property type="entry name" value="Peroxidase"/>
    <property type="match status" value="1"/>
</dbReference>
<dbReference type="FunFam" id="1.10.520.10:FF:000001">
    <property type="entry name" value="Peroxidase"/>
    <property type="match status" value="1"/>
</dbReference>
<dbReference type="Gene3D" id="1.10.520.10">
    <property type="match status" value="1"/>
</dbReference>
<dbReference type="Gene3D" id="1.10.420.10">
    <property type="entry name" value="Peroxidase, domain 2"/>
    <property type="match status" value="1"/>
</dbReference>
<dbReference type="InterPro" id="IPR002016">
    <property type="entry name" value="Haem_peroxidase"/>
</dbReference>
<dbReference type="InterPro" id="IPR010255">
    <property type="entry name" value="Haem_peroxidase_sf"/>
</dbReference>
<dbReference type="InterPro" id="IPR000823">
    <property type="entry name" value="Peroxidase_pln"/>
</dbReference>
<dbReference type="InterPro" id="IPR019794">
    <property type="entry name" value="Peroxidases_AS"/>
</dbReference>
<dbReference type="InterPro" id="IPR019793">
    <property type="entry name" value="Peroxidases_heam-ligand_BS"/>
</dbReference>
<dbReference type="InterPro" id="IPR033905">
    <property type="entry name" value="Secretory_peroxidase"/>
</dbReference>
<dbReference type="PANTHER" id="PTHR31235">
    <property type="entry name" value="PEROXIDASE 25-RELATED"/>
    <property type="match status" value="1"/>
</dbReference>
<dbReference type="Pfam" id="PF00141">
    <property type="entry name" value="peroxidase"/>
    <property type="match status" value="1"/>
</dbReference>
<dbReference type="PRINTS" id="PR00458">
    <property type="entry name" value="PEROXIDASE"/>
</dbReference>
<dbReference type="PRINTS" id="PR00461">
    <property type="entry name" value="PLPEROXIDASE"/>
</dbReference>
<dbReference type="SUPFAM" id="SSF48113">
    <property type="entry name" value="Heme-dependent peroxidases"/>
    <property type="match status" value="1"/>
</dbReference>
<dbReference type="PROSITE" id="PS00435">
    <property type="entry name" value="PEROXIDASE_1"/>
    <property type="match status" value="1"/>
</dbReference>
<dbReference type="PROSITE" id="PS00436">
    <property type="entry name" value="PEROXIDASE_2"/>
    <property type="match status" value="1"/>
</dbReference>
<dbReference type="PROSITE" id="PS50873">
    <property type="entry name" value="PEROXIDASE_4"/>
    <property type="match status" value="1"/>
</dbReference>
<sequence>MSSKRVTWLSLTWVLVFLCLSVELEAQLQVGFYRTSCGLAEFIVKDEVRKGFIRDSGVAPGLVRMHFHDCFVRGCDGSVLIDSTPSNTAEKDSPANNPSLRGFEVIDSAKARLEAVCKGVVSCADIVAFAARDSVEITGGLGYDVPAGRRDGRISLASEASTNLPPPTFTVDQLTQFFSNKGLTQDEMVTLSGAHTIGRSHCSSFSNRLYNFNGTSGQDPTLDPQYAASLKTQCPQGSTNTNLVVPMNPSSPSITDVGYYVDVLRNRGLFTSDQTLLTDTTTATQVRQNAGNPFLWKNKFASAMVKMGQLGVLIGEAGQIRANCRVINS</sequence>
<feature type="signal peptide" evidence="2">
    <location>
        <begin position="1"/>
        <end position="26"/>
    </location>
</feature>
<feature type="chain" id="PRO_0000363739" description="Peroxidase 5">
    <location>
        <begin position="27"/>
        <end position="329"/>
    </location>
</feature>
<feature type="active site" description="Proton acceptor" evidence="3 4">
    <location>
        <position position="68"/>
    </location>
</feature>
<feature type="binding site" evidence="3">
    <location>
        <position position="69"/>
    </location>
    <ligand>
        <name>Ca(2+)</name>
        <dbReference type="ChEBI" id="CHEBI:29108"/>
        <label>1</label>
    </ligand>
</feature>
<feature type="binding site" evidence="3">
    <location>
        <position position="72"/>
    </location>
    <ligand>
        <name>Ca(2+)</name>
        <dbReference type="ChEBI" id="CHEBI:29108"/>
        <label>1</label>
    </ligand>
</feature>
<feature type="binding site" evidence="3">
    <location>
        <position position="74"/>
    </location>
    <ligand>
        <name>Ca(2+)</name>
        <dbReference type="ChEBI" id="CHEBI:29108"/>
        <label>1</label>
    </ligand>
</feature>
<feature type="binding site" evidence="3">
    <location>
        <position position="76"/>
    </location>
    <ligand>
        <name>Ca(2+)</name>
        <dbReference type="ChEBI" id="CHEBI:29108"/>
        <label>1</label>
    </ligand>
</feature>
<feature type="binding site" evidence="3">
    <location>
        <position position="78"/>
    </location>
    <ligand>
        <name>Ca(2+)</name>
        <dbReference type="ChEBI" id="CHEBI:29108"/>
        <label>1</label>
    </ligand>
</feature>
<feature type="binding site" evidence="3">
    <location>
        <position position="165"/>
    </location>
    <ligand>
        <name>substrate</name>
    </ligand>
</feature>
<feature type="binding site" description="axial binding residue" evidence="3">
    <location>
        <position position="195"/>
    </location>
    <ligand>
        <name>heme b</name>
        <dbReference type="ChEBI" id="CHEBI:60344"/>
    </ligand>
    <ligandPart>
        <name>Fe</name>
        <dbReference type="ChEBI" id="CHEBI:18248"/>
    </ligandPart>
</feature>
<feature type="binding site" evidence="3">
    <location>
        <position position="196"/>
    </location>
    <ligand>
        <name>Ca(2+)</name>
        <dbReference type="ChEBI" id="CHEBI:29108"/>
        <label>2</label>
    </ligand>
</feature>
<feature type="binding site" evidence="3">
    <location>
        <position position="251"/>
    </location>
    <ligand>
        <name>Ca(2+)</name>
        <dbReference type="ChEBI" id="CHEBI:29108"/>
        <label>2</label>
    </ligand>
</feature>
<feature type="binding site" evidence="3">
    <location>
        <position position="256"/>
    </location>
    <ligand>
        <name>Ca(2+)</name>
        <dbReference type="ChEBI" id="CHEBI:29108"/>
        <label>2</label>
    </ligand>
</feature>
<feature type="site" description="Transition state stabilizer" evidence="3">
    <location>
        <position position="64"/>
    </location>
</feature>
<feature type="modified residue" description="Pyrrolidone carboxylic acid" evidence="3">
    <location>
        <position position="27"/>
    </location>
</feature>
<feature type="glycosylation site" description="N-linked (GlcNAc...) asparagine" evidence="2">
    <location>
        <position position="213"/>
    </location>
</feature>
<feature type="disulfide bond" evidence="3">
    <location>
        <begin position="37"/>
        <end position="117"/>
    </location>
</feature>
<feature type="disulfide bond" evidence="3">
    <location>
        <begin position="70"/>
        <end position="75"/>
    </location>
</feature>
<feature type="disulfide bond" evidence="3">
    <location>
        <begin position="123"/>
        <end position="324"/>
    </location>
</feature>
<feature type="disulfide bond" evidence="3">
    <location>
        <begin position="202"/>
        <end position="234"/>
    </location>
</feature>
<name>PER5_VITVI</name>
<reference key="1">
    <citation type="journal article" date="2007" name="Nature">
        <title>The grapevine genome sequence suggests ancestral hexaploidization in major angiosperm phyla.</title>
        <authorList>
            <person name="Jaillon O."/>
            <person name="Aury J.-M."/>
            <person name="Noel B."/>
            <person name="Policriti A."/>
            <person name="Clepet C."/>
            <person name="Casagrande A."/>
            <person name="Choisne N."/>
            <person name="Aubourg S."/>
            <person name="Vitulo N."/>
            <person name="Jubin C."/>
            <person name="Vezzi A."/>
            <person name="Legeai F."/>
            <person name="Hugueney P."/>
            <person name="Dasilva C."/>
            <person name="Horner D."/>
            <person name="Mica E."/>
            <person name="Jublot D."/>
            <person name="Poulain J."/>
            <person name="Bruyere C."/>
            <person name="Billault A."/>
            <person name="Segurens B."/>
            <person name="Gouyvenoux M."/>
            <person name="Ugarte E."/>
            <person name="Cattonaro F."/>
            <person name="Anthouard V."/>
            <person name="Vico V."/>
            <person name="Del Fabbro C."/>
            <person name="Alaux M."/>
            <person name="Di Gaspero G."/>
            <person name="Dumas V."/>
            <person name="Felice N."/>
            <person name="Paillard S."/>
            <person name="Juman I."/>
            <person name="Moroldo M."/>
            <person name="Scalabrin S."/>
            <person name="Canaguier A."/>
            <person name="Le Clainche I."/>
            <person name="Malacrida G."/>
            <person name="Durand E."/>
            <person name="Pesole G."/>
            <person name="Laucou V."/>
            <person name="Chatelet P."/>
            <person name="Merdinoglu D."/>
            <person name="Delledonne M."/>
            <person name="Pezzotti M."/>
            <person name="Lecharny A."/>
            <person name="Scarpelli C."/>
            <person name="Artiguenave F."/>
            <person name="Pe M.E."/>
            <person name="Valle G."/>
            <person name="Morgante M."/>
            <person name="Caboche M."/>
            <person name="Adam-Blondon A.-F."/>
            <person name="Weissenbach J."/>
            <person name="Quetier F."/>
            <person name="Wincker P."/>
        </authorList>
    </citation>
    <scope>NUCLEOTIDE SEQUENCE [LARGE SCALE GENOMIC DNA]</scope>
    <source>
        <strain evidence="5">cv. Pinot noir / PN40024</strain>
    </source>
</reference>
<reference evidence="6" key="2">
    <citation type="submission" date="2008-07" db="UniProtKB">
        <authorList>
            <person name="Belchi-Navarro S."/>
            <person name="Almagro L."/>
            <person name="Bru R."/>
            <person name="Pedreno M.A."/>
        </authorList>
    </citation>
    <scope>PROTEIN SEQUENCE OF 92-110</scope>
</reference>
<proteinExistence type="evidence at protein level"/>
<comment type="function">
    <text evidence="6">Removal of H(2)O(2), oxidation of toxic reductants, biosynthesis and degradation of lignin, suberization, auxin catabolism, response to environmental stresses such as wounding, pathogen attack and oxidative stress. These functions might be dependent on each isozyme/isoform in each plant tissue.</text>
</comment>
<comment type="catalytic activity">
    <reaction>
        <text>2 a phenolic donor + H2O2 = 2 a phenolic radical donor + 2 H2O</text>
        <dbReference type="Rhea" id="RHEA:56136"/>
        <dbReference type="ChEBI" id="CHEBI:15377"/>
        <dbReference type="ChEBI" id="CHEBI:16240"/>
        <dbReference type="ChEBI" id="CHEBI:139520"/>
        <dbReference type="ChEBI" id="CHEBI:139521"/>
        <dbReference type="EC" id="1.11.1.7"/>
    </reaction>
</comment>
<comment type="cofactor">
    <cofactor evidence="1 3">
        <name>heme b</name>
        <dbReference type="ChEBI" id="CHEBI:60344"/>
    </cofactor>
    <text evidence="1 3">Binds 1 heme b (iron(II)-protoporphyrin IX) group per subunit.</text>
</comment>
<comment type="cofactor">
    <cofactor evidence="1 3">
        <name>Ca(2+)</name>
        <dbReference type="ChEBI" id="CHEBI:29108"/>
    </cofactor>
    <text evidence="1 3">Binds 2 calcium ions per subunit.</text>
</comment>
<comment type="subcellular location">
    <subcellularLocation>
        <location evidence="3">Secreted</location>
    </subcellularLocation>
</comment>
<comment type="similarity">
    <text evidence="3">Belongs to the peroxidase family. Classical plant (class III) peroxidase subfamily.</text>
</comment>
<gene>
    <name type="ORF">GSVIVT00037159001</name>
    <name type="ORF">LOC100264145</name>
</gene>
<evidence type="ECO:0000250" key="1">
    <source>
        <dbReference type="UniProtKB" id="P22195"/>
    </source>
</evidence>
<evidence type="ECO:0000255" key="2"/>
<evidence type="ECO:0000255" key="3">
    <source>
        <dbReference type="PROSITE-ProRule" id="PRU00297"/>
    </source>
</evidence>
<evidence type="ECO:0000255" key="4">
    <source>
        <dbReference type="PROSITE-ProRule" id="PRU10012"/>
    </source>
</evidence>
<evidence type="ECO:0000269" key="5">
    <source>
    </source>
</evidence>
<evidence type="ECO:0000305" key="6"/>
<organism>
    <name type="scientific">Vitis vinifera</name>
    <name type="common">Grape</name>
    <dbReference type="NCBI Taxonomy" id="29760"/>
    <lineage>
        <taxon>Eukaryota</taxon>
        <taxon>Viridiplantae</taxon>
        <taxon>Streptophyta</taxon>
        <taxon>Embryophyta</taxon>
        <taxon>Tracheophyta</taxon>
        <taxon>Spermatophyta</taxon>
        <taxon>Magnoliopsida</taxon>
        <taxon>eudicotyledons</taxon>
        <taxon>Gunneridae</taxon>
        <taxon>Pentapetalae</taxon>
        <taxon>rosids</taxon>
        <taxon>Vitales</taxon>
        <taxon>Vitaceae</taxon>
        <taxon>Viteae</taxon>
        <taxon>Vitis</taxon>
    </lineage>
</organism>
<protein>
    <recommendedName>
        <fullName evidence="1">Peroxidase 5</fullName>
        <ecNumber>1.11.1.7</ecNumber>
    </recommendedName>
</protein>
<accession>A7QEU4</accession>